<comment type="function">
    <text evidence="1">Potent and specific cellular inhibitor of CaM-kinase II (CAMK2). Traps Ca(2+)/calmodulin on CAMK2 (By similarity).</text>
</comment>
<comment type="subcellular location">
    <subcellularLocation>
        <location evidence="1">Nucleus</location>
    </subcellularLocation>
    <subcellularLocation>
        <location evidence="1">Cytoplasm</location>
        <location evidence="1">Cytosol</location>
    </subcellularLocation>
</comment>
<comment type="similarity">
    <text evidence="2">Belongs to the CAMK2N family.</text>
</comment>
<evidence type="ECO:0000250" key="1"/>
<evidence type="ECO:0000305" key="2"/>
<accession>Q6P6Z4</accession>
<organism>
    <name type="scientific">Xenopus laevis</name>
    <name type="common">African clawed frog</name>
    <dbReference type="NCBI Taxonomy" id="8355"/>
    <lineage>
        <taxon>Eukaryota</taxon>
        <taxon>Metazoa</taxon>
        <taxon>Chordata</taxon>
        <taxon>Craniata</taxon>
        <taxon>Vertebrata</taxon>
        <taxon>Euteleostomi</taxon>
        <taxon>Amphibia</taxon>
        <taxon>Batrachia</taxon>
        <taxon>Anura</taxon>
        <taxon>Pipoidea</taxon>
        <taxon>Pipidae</taxon>
        <taxon>Xenopodinae</taxon>
        <taxon>Xenopus</taxon>
        <taxon>Xenopus</taxon>
    </lineage>
</organism>
<gene>
    <name type="primary">camk2n2</name>
</gene>
<reference key="1">
    <citation type="submission" date="2003-11" db="EMBL/GenBank/DDBJ databases">
        <authorList>
            <consortium name="NIH - Xenopus Gene Collection (XGC) project"/>
        </authorList>
    </citation>
    <scope>NUCLEOTIDE SEQUENCE [LARGE SCALE MRNA]</scope>
    <source>
        <tissue>Kidney</tissue>
    </source>
</reference>
<protein>
    <recommendedName>
        <fullName>Calcium/calmodulin-dependent protein kinase II inhibitor 2</fullName>
    </recommendedName>
</protein>
<proteinExistence type="inferred from homology"/>
<sequence length="79" mass="8660">MSEILPYSDEKMGHYGSDGEVGQISFSCRLQDTSSFFGGNQQKRPPKLGQIGRAKRVVIEDDRIDEVLKGVSDKSPSGV</sequence>
<name>CK2N2_XENLA</name>
<feature type="chain" id="PRO_0000327269" description="Calcium/calmodulin-dependent protein kinase II inhibitor 2">
    <location>
        <begin position="1"/>
        <end position="79"/>
    </location>
</feature>
<feature type="region of interest" description="Inhibitory domain" evidence="1">
    <location>
        <begin position="43"/>
        <end position="69"/>
    </location>
</feature>
<dbReference type="EMBL" id="BC061942">
    <property type="protein sequence ID" value="AAH61942.1"/>
    <property type="molecule type" value="mRNA"/>
</dbReference>
<dbReference type="RefSeq" id="NP_001165246.1">
    <property type="nucleotide sequence ID" value="NM_001171775.1"/>
</dbReference>
<dbReference type="DNASU" id="779109"/>
<dbReference type="GeneID" id="779109"/>
<dbReference type="KEGG" id="xla:779109"/>
<dbReference type="AGR" id="Xenbase:XB-GENE-960928"/>
<dbReference type="CTD" id="779109"/>
<dbReference type="OrthoDB" id="9922824at2759"/>
<dbReference type="Proteomes" id="UP000186698">
    <property type="component" value="Chromosome 5L"/>
</dbReference>
<dbReference type="Bgee" id="779109">
    <property type="expression patterns" value="Expressed in neurula embryo and 13 other cell types or tissues"/>
</dbReference>
<dbReference type="GO" id="GO:0005829">
    <property type="term" value="C:cytosol"/>
    <property type="evidence" value="ECO:0007669"/>
    <property type="project" value="UniProtKB-SubCell"/>
</dbReference>
<dbReference type="GO" id="GO:0005634">
    <property type="term" value="C:nucleus"/>
    <property type="evidence" value="ECO:0007669"/>
    <property type="project" value="UniProtKB-SubCell"/>
</dbReference>
<dbReference type="GO" id="GO:0008427">
    <property type="term" value="F:calcium-dependent protein kinase inhibitor activity"/>
    <property type="evidence" value="ECO:0000318"/>
    <property type="project" value="GO_Central"/>
</dbReference>
<dbReference type="GO" id="GO:0019901">
    <property type="term" value="F:protein kinase binding"/>
    <property type="evidence" value="ECO:0000318"/>
    <property type="project" value="GO_Central"/>
</dbReference>
<dbReference type="InterPro" id="IPR026779">
    <property type="entry name" value="Camk2n"/>
</dbReference>
<dbReference type="PANTHER" id="PTHR31007">
    <property type="entry name" value="CALCIUM/CALMODULIN-DEPENDENT PROTEIN KINASE II INHIBITOR 2"/>
    <property type="match status" value="1"/>
</dbReference>
<dbReference type="PANTHER" id="PTHR31007:SF1">
    <property type="entry name" value="CALCIUM_CALMODULIN-DEPENDENT PROTEIN KINASE II INHIBITOR 2"/>
    <property type="match status" value="1"/>
</dbReference>
<dbReference type="Pfam" id="PF15170">
    <property type="entry name" value="CaM-KIIN"/>
    <property type="match status" value="1"/>
</dbReference>
<keyword id="KW-0963">Cytoplasm</keyword>
<keyword id="KW-0539">Nucleus</keyword>
<keyword id="KW-0649">Protein kinase inhibitor</keyword>
<keyword id="KW-1185">Reference proteome</keyword>